<dbReference type="EC" id="2.9.1.3" evidence="1"/>
<dbReference type="EMBL" id="CP001144">
    <property type="protein sequence ID" value="ACH74999.1"/>
    <property type="molecule type" value="Genomic_DNA"/>
</dbReference>
<dbReference type="SMR" id="B5FLM4"/>
<dbReference type="KEGG" id="sed:SeD_A0562"/>
<dbReference type="HOGENOM" id="CLU_043456_1_0_6"/>
<dbReference type="Proteomes" id="UP000008322">
    <property type="component" value="Chromosome"/>
</dbReference>
<dbReference type="GO" id="GO:0016765">
    <property type="term" value="F:transferase activity, transferring alkyl or aryl (other than methyl) groups"/>
    <property type="evidence" value="ECO:0007669"/>
    <property type="project" value="UniProtKB-UniRule"/>
</dbReference>
<dbReference type="GO" id="GO:0043828">
    <property type="term" value="F:tRNA 2-selenouridine synthase activity"/>
    <property type="evidence" value="ECO:0007669"/>
    <property type="project" value="UniProtKB-EC"/>
</dbReference>
<dbReference type="GO" id="GO:0002098">
    <property type="term" value="P:tRNA wobble uridine modification"/>
    <property type="evidence" value="ECO:0007669"/>
    <property type="project" value="UniProtKB-UniRule"/>
</dbReference>
<dbReference type="CDD" id="cd01520">
    <property type="entry name" value="RHOD_YbbB"/>
    <property type="match status" value="1"/>
</dbReference>
<dbReference type="FunFam" id="3.40.250.10:FF:000009">
    <property type="entry name" value="tRNA 2-selenouridine/geranyl-2-thiouridine synthase"/>
    <property type="match status" value="1"/>
</dbReference>
<dbReference type="Gene3D" id="3.40.250.10">
    <property type="entry name" value="Rhodanese-like domain"/>
    <property type="match status" value="1"/>
</dbReference>
<dbReference type="HAMAP" id="MF_01622">
    <property type="entry name" value="tRNA_sel_U_synth"/>
    <property type="match status" value="1"/>
</dbReference>
<dbReference type="InterPro" id="IPR001763">
    <property type="entry name" value="Rhodanese-like_dom"/>
</dbReference>
<dbReference type="InterPro" id="IPR036873">
    <property type="entry name" value="Rhodanese-like_dom_sf"/>
</dbReference>
<dbReference type="InterPro" id="IPR017582">
    <property type="entry name" value="SelU"/>
</dbReference>
<dbReference type="NCBIfam" id="NF008749">
    <property type="entry name" value="PRK11784.1-1"/>
    <property type="match status" value="1"/>
</dbReference>
<dbReference type="NCBIfam" id="NF008751">
    <property type="entry name" value="PRK11784.1-3"/>
    <property type="match status" value="1"/>
</dbReference>
<dbReference type="NCBIfam" id="TIGR03167">
    <property type="entry name" value="tRNA_sel_U_synt"/>
    <property type="match status" value="1"/>
</dbReference>
<dbReference type="PANTHER" id="PTHR30401">
    <property type="entry name" value="TRNA 2-SELENOURIDINE SYNTHASE"/>
    <property type="match status" value="1"/>
</dbReference>
<dbReference type="PANTHER" id="PTHR30401:SF0">
    <property type="entry name" value="TRNA 2-SELENOURIDINE SYNTHASE"/>
    <property type="match status" value="1"/>
</dbReference>
<dbReference type="Pfam" id="PF00581">
    <property type="entry name" value="Rhodanese"/>
    <property type="match status" value="1"/>
</dbReference>
<dbReference type="SMART" id="SM00450">
    <property type="entry name" value="RHOD"/>
    <property type="match status" value="1"/>
</dbReference>
<dbReference type="SUPFAM" id="SSF52821">
    <property type="entry name" value="Rhodanese/Cell cycle control phosphatase"/>
    <property type="match status" value="1"/>
</dbReference>
<dbReference type="PROSITE" id="PS50206">
    <property type="entry name" value="RHODANESE_3"/>
    <property type="match status" value="1"/>
</dbReference>
<name>SELU_SALDC</name>
<evidence type="ECO:0000255" key="1">
    <source>
        <dbReference type="HAMAP-Rule" id="MF_01622"/>
    </source>
</evidence>
<sequence>MQDRQKAQDYRAILLADTPLIDVRAPIEFEQGAMPGAINLPLMMDDERAAVGTCYKRQGADAALALGHRLVCGDIRQQRLEAWKAAYQRFPNGYLCCARGGQRSHIVQRWLQETGIDCPLIEGGYKALRQTAIQATWQLAQKPILLIGGCTGSGKTQLVRQQPNGVDLEGLARHRGSSFGRTLNPQLSQASFENKLAVELLKINARQTLKRWVLEDEGRTIGANHLPECLRERMAQAPIAVVEDPFALRLERLREEYFIRMHHDFTHAYGDEAGWQAYSEYLHHGLFAIRRRLGLQRFAELTDTLDRALAEQLSSGSTDGHMAWLVPLLNEYYDPMYRYQLEKKAANIVFRGPWQDVANWLKAQ</sequence>
<protein>
    <recommendedName>
        <fullName evidence="1">tRNA 2-selenouridine synthase</fullName>
        <ecNumber evidence="1">2.9.1.3</ecNumber>
    </recommendedName>
</protein>
<gene>
    <name evidence="1" type="primary">selU</name>
    <name type="ordered locus">SeD_A0562</name>
</gene>
<feature type="chain" id="PRO_1000186080" description="tRNA 2-selenouridine synthase">
    <location>
        <begin position="1"/>
        <end position="364"/>
    </location>
</feature>
<feature type="domain" description="Rhodanese" evidence="1">
    <location>
        <begin position="14"/>
        <end position="137"/>
    </location>
</feature>
<feature type="active site" description="S-selanylcysteine intermediate" evidence="1">
    <location>
        <position position="97"/>
    </location>
</feature>
<comment type="function">
    <text evidence="1">Involved in the post-transcriptional modification of the uridine at the wobble position (U34) of tRNA(Lys), tRNA(Glu) and tRNA(Gln). Catalyzes the conversion of 2-thiouridine (S2U-RNA) to 2-selenouridine (Se2U-RNA). Acts in a two-step process involving geranylation of 2-thiouridine (S2U) to S-geranyl-2-thiouridine (geS2U) and subsequent selenation of the latter derivative to 2-selenouridine (Se2U) in the tRNA chain.</text>
</comment>
<comment type="catalytic activity">
    <reaction evidence="1">
        <text>5-methylaminomethyl-2-thiouridine(34) in tRNA + selenophosphate + (2E)-geranyl diphosphate + H2O + H(+) = 5-methylaminomethyl-2-selenouridine(34) in tRNA + (2E)-thiogeraniol + phosphate + diphosphate</text>
        <dbReference type="Rhea" id="RHEA:42716"/>
        <dbReference type="Rhea" id="RHEA-COMP:10195"/>
        <dbReference type="Rhea" id="RHEA-COMP:10196"/>
        <dbReference type="ChEBI" id="CHEBI:15377"/>
        <dbReference type="ChEBI" id="CHEBI:15378"/>
        <dbReference type="ChEBI" id="CHEBI:16144"/>
        <dbReference type="ChEBI" id="CHEBI:33019"/>
        <dbReference type="ChEBI" id="CHEBI:43474"/>
        <dbReference type="ChEBI" id="CHEBI:58057"/>
        <dbReference type="ChEBI" id="CHEBI:74455"/>
        <dbReference type="ChEBI" id="CHEBI:82743"/>
        <dbReference type="ChEBI" id="CHEBI:143703"/>
        <dbReference type="EC" id="2.9.1.3"/>
    </reaction>
    <physiologicalReaction direction="left-to-right" evidence="1">
        <dbReference type="Rhea" id="RHEA:42717"/>
    </physiologicalReaction>
</comment>
<comment type="catalytic activity">
    <reaction evidence="1">
        <text>5-methylaminomethyl-2-thiouridine(34) in tRNA + (2E)-geranyl diphosphate = 5-methylaminomethyl-S-(2E)-geranyl-thiouridine(34) in tRNA + diphosphate</text>
        <dbReference type="Rhea" id="RHEA:14085"/>
        <dbReference type="Rhea" id="RHEA-COMP:10195"/>
        <dbReference type="Rhea" id="RHEA-COMP:14654"/>
        <dbReference type="ChEBI" id="CHEBI:33019"/>
        <dbReference type="ChEBI" id="CHEBI:58057"/>
        <dbReference type="ChEBI" id="CHEBI:74455"/>
        <dbReference type="ChEBI" id="CHEBI:140632"/>
    </reaction>
    <physiologicalReaction direction="left-to-right" evidence="1">
        <dbReference type="Rhea" id="RHEA:14086"/>
    </physiologicalReaction>
</comment>
<comment type="catalytic activity">
    <reaction evidence="1">
        <text>5-methylaminomethyl-S-(2E)-geranyl-thiouridine(34) in tRNA + selenophosphate + H(+) = 5-methylaminomethyl-2-(Se-phospho)selenouridine(34) in tRNA + (2E)-thiogeraniol</text>
        <dbReference type="Rhea" id="RHEA:60172"/>
        <dbReference type="Rhea" id="RHEA-COMP:14654"/>
        <dbReference type="Rhea" id="RHEA-COMP:15523"/>
        <dbReference type="ChEBI" id="CHEBI:15378"/>
        <dbReference type="ChEBI" id="CHEBI:16144"/>
        <dbReference type="ChEBI" id="CHEBI:140632"/>
        <dbReference type="ChEBI" id="CHEBI:143702"/>
        <dbReference type="ChEBI" id="CHEBI:143703"/>
    </reaction>
    <physiologicalReaction direction="left-to-right" evidence="1">
        <dbReference type="Rhea" id="RHEA:60173"/>
    </physiologicalReaction>
</comment>
<comment type="catalytic activity">
    <reaction evidence="1">
        <text>5-methylaminomethyl-2-(Se-phospho)selenouridine(34) in tRNA + H2O = 5-methylaminomethyl-2-selenouridine(34) in tRNA + phosphate</text>
        <dbReference type="Rhea" id="RHEA:60176"/>
        <dbReference type="Rhea" id="RHEA-COMP:10196"/>
        <dbReference type="Rhea" id="RHEA-COMP:15523"/>
        <dbReference type="ChEBI" id="CHEBI:15377"/>
        <dbReference type="ChEBI" id="CHEBI:43474"/>
        <dbReference type="ChEBI" id="CHEBI:82743"/>
        <dbReference type="ChEBI" id="CHEBI:143702"/>
    </reaction>
    <physiologicalReaction direction="left-to-right" evidence="1">
        <dbReference type="Rhea" id="RHEA:60177"/>
    </physiologicalReaction>
</comment>
<comment type="subunit">
    <text evidence="1">Monomer.</text>
</comment>
<comment type="similarity">
    <text evidence="1">Belongs to the SelU family.</text>
</comment>
<reference key="1">
    <citation type="journal article" date="2011" name="J. Bacteriol.">
        <title>Comparative genomics of 28 Salmonella enterica isolates: evidence for CRISPR-mediated adaptive sublineage evolution.</title>
        <authorList>
            <person name="Fricke W.F."/>
            <person name="Mammel M.K."/>
            <person name="McDermott P.F."/>
            <person name="Tartera C."/>
            <person name="White D.G."/>
            <person name="Leclerc J.E."/>
            <person name="Ravel J."/>
            <person name="Cebula T.A."/>
        </authorList>
    </citation>
    <scope>NUCLEOTIDE SEQUENCE [LARGE SCALE GENOMIC DNA]</scope>
    <source>
        <strain>CT_02021853</strain>
    </source>
</reference>
<proteinExistence type="inferred from homology"/>
<accession>B5FLM4</accession>
<keyword id="KW-0711">Selenium</keyword>
<keyword id="KW-0808">Transferase</keyword>
<organism>
    <name type="scientific">Salmonella dublin (strain CT_02021853)</name>
    <dbReference type="NCBI Taxonomy" id="439851"/>
    <lineage>
        <taxon>Bacteria</taxon>
        <taxon>Pseudomonadati</taxon>
        <taxon>Pseudomonadota</taxon>
        <taxon>Gammaproteobacteria</taxon>
        <taxon>Enterobacterales</taxon>
        <taxon>Enterobacteriaceae</taxon>
        <taxon>Salmonella</taxon>
    </lineage>
</organism>